<proteinExistence type="inferred from homology"/>
<sequence>MYSIKMRSSNQDVHISGAETICEFDKIEQTVQRFYNKGFFHENGQPDFLNIKIQKIMEPIQQIKALQIIEDDKANLQHLTQECGVTEQALNQGMTYIKNETVYTGAIILSAISGKRLDSFGQRGIRATHFSFEDINNKGDLNERVTDALAIASCINAHPYVKGELCVSDDLTYTTGYFAAAKIGYHRLFDIKPVNTRYGGRIIFVDDCIDLNHYISFLESTPKQVVYETV</sequence>
<reference key="1">
    <citation type="journal article" date="2001" name="Lancet">
        <title>Whole genome sequencing of meticillin-resistant Staphylococcus aureus.</title>
        <authorList>
            <person name="Kuroda M."/>
            <person name="Ohta T."/>
            <person name="Uchiyama I."/>
            <person name="Baba T."/>
            <person name="Yuzawa H."/>
            <person name="Kobayashi I."/>
            <person name="Cui L."/>
            <person name="Oguchi A."/>
            <person name="Aoki K."/>
            <person name="Nagai Y."/>
            <person name="Lian J.-Q."/>
            <person name="Ito T."/>
            <person name="Kanamori M."/>
            <person name="Matsumaru H."/>
            <person name="Maruyama A."/>
            <person name="Murakami H."/>
            <person name="Hosoyama A."/>
            <person name="Mizutani-Ui Y."/>
            <person name="Takahashi N.K."/>
            <person name="Sawano T."/>
            <person name="Inoue R."/>
            <person name="Kaito C."/>
            <person name="Sekimizu K."/>
            <person name="Hirakawa H."/>
            <person name="Kuhara S."/>
            <person name="Goto S."/>
            <person name="Yabuzaki J."/>
            <person name="Kanehisa M."/>
            <person name="Yamashita A."/>
            <person name="Oshima K."/>
            <person name="Furuya K."/>
            <person name="Yoshino C."/>
            <person name="Shiba T."/>
            <person name="Hattori M."/>
            <person name="Ogasawara N."/>
            <person name="Hayashi H."/>
            <person name="Hiramatsu K."/>
        </authorList>
    </citation>
    <scope>NUCLEOTIDE SEQUENCE [LARGE SCALE GENOMIC DNA]</scope>
    <source>
        <strain>Mu50 / ATCC 700699</strain>
    </source>
</reference>
<gene>
    <name evidence="1" type="primary">bioW</name>
    <name type="ordered locus">SAV2423</name>
</gene>
<name>BIOW_STAAM</name>
<organism>
    <name type="scientific">Staphylococcus aureus (strain Mu50 / ATCC 700699)</name>
    <dbReference type="NCBI Taxonomy" id="158878"/>
    <lineage>
        <taxon>Bacteria</taxon>
        <taxon>Bacillati</taxon>
        <taxon>Bacillota</taxon>
        <taxon>Bacilli</taxon>
        <taxon>Bacillales</taxon>
        <taxon>Staphylococcaceae</taxon>
        <taxon>Staphylococcus</taxon>
    </lineage>
</organism>
<accession>P67549</accession>
<accession>Q99RK9</accession>
<comment type="function">
    <text evidence="1">Catalyzes the transformation of pimelate into pimeloyl-CoA with concomitant hydrolysis of ATP to AMP.</text>
</comment>
<comment type="catalytic activity">
    <reaction evidence="1">
        <text>heptanedioate + ATP + CoA = 6-carboxyhexanoyl-CoA + AMP + diphosphate</text>
        <dbReference type="Rhea" id="RHEA:14781"/>
        <dbReference type="ChEBI" id="CHEBI:30616"/>
        <dbReference type="ChEBI" id="CHEBI:33019"/>
        <dbReference type="ChEBI" id="CHEBI:36165"/>
        <dbReference type="ChEBI" id="CHEBI:57287"/>
        <dbReference type="ChEBI" id="CHEBI:57360"/>
        <dbReference type="ChEBI" id="CHEBI:456215"/>
        <dbReference type="EC" id="6.2.1.14"/>
    </reaction>
</comment>
<comment type="cofactor">
    <cofactor evidence="1">
        <name>Mg(2+)</name>
        <dbReference type="ChEBI" id="CHEBI:18420"/>
    </cofactor>
</comment>
<comment type="pathway">
    <text evidence="1">Metabolic intermediate metabolism; pimeloyl-CoA biosynthesis; pimeloyl-CoA from pimelate: step 1/1.</text>
</comment>
<comment type="subunit">
    <text evidence="1">Homodimer.</text>
</comment>
<comment type="similarity">
    <text evidence="1">Belongs to the BioW family.</text>
</comment>
<feature type="chain" id="PRO_0000191018" description="6-carboxyhexanoate--CoA ligase">
    <location>
        <begin position="1"/>
        <end position="230"/>
    </location>
</feature>
<dbReference type="EC" id="6.2.1.14" evidence="1"/>
<dbReference type="EMBL" id="BA000017">
    <property type="protein sequence ID" value="BAB58585.1"/>
    <property type="molecule type" value="Genomic_DNA"/>
</dbReference>
<dbReference type="RefSeq" id="WP_000286875.1">
    <property type="nucleotide sequence ID" value="NC_002758.2"/>
</dbReference>
<dbReference type="SMR" id="P67549"/>
<dbReference type="KEGG" id="sav:SAV2423"/>
<dbReference type="HOGENOM" id="CLU_076858_0_0_9"/>
<dbReference type="PhylomeDB" id="P67549"/>
<dbReference type="UniPathway" id="UPA00999">
    <property type="reaction ID" value="UER00351"/>
</dbReference>
<dbReference type="Proteomes" id="UP000002481">
    <property type="component" value="Chromosome"/>
</dbReference>
<dbReference type="GO" id="GO:0042410">
    <property type="term" value="F:6-carboxyhexanoate-CoA ligase activity"/>
    <property type="evidence" value="ECO:0007669"/>
    <property type="project" value="UniProtKB-UniRule"/>
</dbReference>
<dbReference type="GO" id="GO:0005524">
    <property type="term" value="F:ATP binding"/>
    <property type="evidence" value="ECO:0007669"/>
    <property type="project" value="UniProtKB-KW"/>
</dbReference>
<dbReference type="GO" id="GO:0000287">
    <property type="term" value="F:magnesium ion binding"/>
    <property type="evidence" value="ECO:0007669"/>
    <property type="project" value="UniProtKB-UniRule"/>
</dbReference>
<dbReference type="GO" id="GO:0009102">
    <property type="term" value="P:biotin biosynthetic process"/>
    <property type="evidence" value="ECO:0007669"/>
    <property type="project" value="UniProtKB-UniRule"/>
</dbReference>
<dbReference type="HAMAP" id="MF_00668">
    <property type="entry name" value="BioW"/>
    <property type="match status" value="1"/>
</dbReference>
<dbReference type="InterPro" id="IPR005499">
    <property type="entry name" value="BioW"/>
</dbReference>
<dbReference type="NCBIfam" id="NF002360">
    <property type="entry name" value="PRK01322.1"/>
    <property type="match status" value="1"/>
</dbReference>
<dbReference type="Pfam" id="PF03744">
    <property type="entry name" value="BioW"/>
    <property type="match status" value="1"/>
</dbReference>
<evidence type="ECO:0000255" key="1">
    <source>
        <dbReference type="HAMAP-Rule" id="MF_00668"/>
    </source>
</evidence>
<keyword id="KW-0067">ATP-binding</keyword>
<keyword id="KW-0093">Biotin biosynthesis</keyword>
<keyword id="KW-0436">Ligase</keyword>
<keyword id="KW-0460">Magnesium</keyword>
<keyword id="KW-0547">Nucleotide-binding</keyword>
<protein>
    <recommendedName>
        <fullName evidence="1">6-carboxyhexanoate--CoA ligase</fullName>
        <ecNumber evidence="1">6.2.1.14</ecNumber>
    </recommendedName>
    <alternativeName>
        <fullName evidence="1">Pimeloyl-CoA synthase</fullName>
    </alternativeName>
</protein>